<comment type="function">
    <text evidence="1">Catalyzes the dehydration of the S-form of NAD(P)HX at the expense of ATP, which is converted to ADP. Together with NAD(P)HX epimerase, which catalyzes the epimerization of the S- and R-forms, the enzyme allows the repair of both epimers of NAD(P)HX, a damaged form of NAD(P)H that is a result of enzymatic or heat-dependent hydration.</text>
</comment>
<comment type="catalytic activity">
    <reaction evidence="1">
        <text>(6S)-NADHX + ATP = ADP + phosphate + NADH + H(+)</text>
        <dbReference type="Rhea" id="RHEA:19017"/>
        <dbReference type="ChEBI" id="CHEBI:15378"/>
        <dbReference type="ChEBI" id="CHEBI:30616"/>
        <dbReference type="ChEBI" id="CHEBI:43474"/>
        <dbReference type="ChEBI" id="CHEBI:57945"/>
        <dbReference type="ChEBI" id="CHEBI:64074"/>
        <dbReference type="ChEBI" id="CHEBI:456216"/>
        <dbReference type="EC" id="4.2.1.93"/>
    </reaction>
</comment>
<comment type="catalytic activity">
    <reaction>
        <text>(6S)-NADPHX + ATP = ADP + phosphate + NADPH + H(+)</text>
        <dbReference type="Rhea" id="RHEA:32231"/>
        <dbReference type="ChEBI" id="CHEBI:15378"/>
        <dbReference type="ChEBI" id="CHEBI:30616"/>
        <dbReference type="ChEBI" id="CHEBI:43474"/>
        <dbReference type="ChEBI" id="CHEBI:57783"/>
        <dbReference type="ChEBI" id="CHEBI:64076"/>
        <dbReference type="ChEBI" id="CHEBI:456216"/>
        <dbReference type="EC" id="4.2.1.93"/>
    </reaction>
</comment>
<comment type="cofactor">
    <cofactor evidence="1">
        <name>Mg(2+)</name>
        <dbReference type="ChEBI" id="CHEBI:18420"/>
    </cofactor>
</comment>
<comment type="similarity">
    <text evidence="1">Belongs to the NnrD/CARKD family.</text>
</comment>
<name>NNRD_VITVI</name>
<protein>
    <recommendedName>
        <fullName evidence="1">ATP-dependent (S)-NAD(P)H-hydrate dehydratase</fullName>
        <ecNumber evidence="1">4.2.1.93</ecNumber>
    </recommendedName>
    <alternativeName>
        <fullName evidence="1">ATP-dependent NAD(P)HX dehydratase</fullName>
    </alternativeName>
</protein>
<dbReference type="EC" id="4.2.1.93" evidence="1"/>
<dbReference type="EMBL" id="FN595749">
    <property type="protein sequence ID" value="CCB50393.1"/>
    <property type="molecule type" value="Genomic_DNA"/>
</dbReference>
<dbReference type="EMBL" id="FN597023">
    <property type="status" value="NOT_ANNOTATED_CDS"/>
    <property type="molecule type" value="Genomic_DNA"/>
</dbReference>
<dbReference type="SMR" id="F6HDM2"/>
<dbReference type="FunCoup" id="F6HDM2">
    <property type="interactions" value="1513"/>
</dbReference>
<dbReference type="STRING" id="29760.F6HDM2"/>
<dbReference type="PaxDb" id="29760-VIT_05s0020g02800.t01"/>
<dbReference type="eggNOG" id="KOG3974">
    <property type="taxonomic scope" value="Eukaryota"/>
</dbReference>
<dbReference type="HOGENOM" id="CLU_030651_1_0_1"/>
<dbReference type="InParanoid" id="F6HDM2"/>
<dbReference type="Proteomes" id="UP000009183">
    <property type="component" value="Chromosome 5"/>
</dbReference>
<dbReference type="Proteomes" id="UP000009183">
    <property type="component" value="Chromosome 5, unordered"/>
</dbReference>
<dbReference type="GO" id="GO:0005524">
    <property type="term" value="F:ATP binding"/>
    <property type="evidence" value="ECO:0007669"/>
    <property type="project" value="UniProtKB-KW"/>
</dbReference>
<dbReference type="GO" id="GO:0047453">
    <property type="term" value="F:ATP-dependent NAD(P)H-hydrate dehydratase activity"/>
    <property type="evidence" value="ECO:0000318"/>
    <property type="project" value="GO_Central"/>
</dbReference>
<dbReference type="GO" id="GO:0110051">
    <property type="term" value="P:metabolite repair"/>
    <property type="evidence" value="ECO:0000318"/>
    <property type="project" value="GO_Central"/>
</dbReference>
<dbReference type="GO" id="GO:0046496">
    <property type="term" value="P:nicotinamide nucleotide metabolic process"/>
    <property type="evidence" value="ECO:0007669"/>
    <property type="project" value="UniProtKB-UniRule"/>
</dbReference>
<dbReference type="CDD" id="cd01171">
    <property type="entry name" value="YXKO-related"/>
    <property type="match status" value="1"/>
</dbReference>
<dbReference type="FunFam" id="3.40.1190.20:FF:000028">
    <property type="entry name" value="ATP-dependent (S)-NAD(P)H-hydrate dehydratase"/>
    <property type="match status" value="1"/>
</dbReference>
<dbReference type="Gene3D" id="3.40.1190.20">
    <property type="match status" value="1"/>
</dbReference>
<dbReference type="HAMAP" id="MF_01965">
    <property type="entry name" value="NADHX_dehydratase"/>
    <property type="match status" value="1"/>
</dbReference>
<dbReference type="InterPro" id="IPR000631">
    <property type="entry name" value="CARKD"/>
</dbReference>
<dbReference type="InterPro" id="IPR029056">
    <property type="entry name" value="Ribokinase-like"/>
</dbReference>
<dbReference type="NCBIfam" id="TIGR00196">
    <property type="entry name" value="yjeF_cterm"/>
    <property type="match status" value="1"/>
</dbReference>
<dbReference type="PANTHER" id="PTHR12592:SF0">
    <property type="entry name" value="ATP-DEPENDENT (S)-NAD(P)H-HYDRATE DEHYDRATASE"/>
    <property type="match status" value="1"/>
</dbReference>
<dbReference type="PANTHER" id="PTHR12592">
    <property type="entry name" value="ATP-DEPENDENT (S)-NAD(P)H-HYDRATE DEHYDRATASE FAMILY MEMBER"/>
    <property type="match status" value="1"/>
</dbReference>
<dbReference type="Pfam" id="PF01256">
    <property type="entry name" value="Carb_kinase"/>
    <property type="match status" value="1"/>
</dbReference>
<dbReference type="SUPFAM" id="SSF53613">
    <property type="entry name" value="Ribokinase-like"/>
    <property type="match status" value="1"/>
</dbReference>
<dbReference type="PROSITE" id="PS51383">
    <property type="entry name" value="YJEF_C_3"/>
    <property type="match status" value="1"/>
</dbReference>
<organism>
    <name type="scientific">Vitis vinifera</name>
    <name type="common">Grape</name>
    <dbReference type="NCBI Taxonomy" id="29760"/>
    <lineage>
        <taxon>Eukaryota</taxon>
        <taxon>Viridiplantae</taxon>
        <taxon>Streptophyta</taxon>
        <taxon>Embryophyta</taxon>
        <taxon>Tracheophyta</taxon>
        <taxon>Spermatophyta</taxon>
        <taxon>Magnoliopsida</taxon>
        <taxon>eudicotyledons</taxon>
        <taxon>Gunneridae</taxon>
        <taxon>Pentapetalae</taxon>
        <taxon>rosids</taxon>
        <taxon>Vitales</taxon>
        <taxon>Vitaceae</taxon>
        <taxon>Viteae</taxon>
        <taxon>Vitis</taxon>
    </lineage>
</organism>
<sequence length="354" mass="38108">MLASSAVFRRQEFLIRCLGVGGQSQQFYRKSIPRTMALEADAENILRAITPTLDLARHKGQAGKIAVIGGCREYTGAPYFSAISALKIGADLSHVFCTKDAAPVIKSYSPELIVHPLLEESYSVREEDKKAISEKVLTEVVKWMERFDCLVVGPGLGRDPFLLGCVSEIMKHARQSNVPIVIDGDGLFLVTNSLDLVSGYPLAVLTPNVNEYKRLVQKVLNCEVGDQDAAEQLLSLAKGIGGVTILRKGKSDLISDGETVNSVGIYGSPRRCGGQGDILSGSVAVFLSWARQRIIAEGDLNISPKSPTVLGSIAGSALMRKAASLAFENKKRSTLTGDIIECLGRSLEDICPAK</sequence>
<reference key="1">
    <citation type="journal article" date="2007" name="Nature">
        <title>The grapevine genome sequence suggests ancestral hexaploidization in major angiosperm phyla.</title>
        <authorList>
            <person name="Jaillon O."/>
            <person name="Aury J.-M."/>
            <person name="Noel B."/>
            <person name="Policriti A."/>
            <person name="Clepet C."/>
            <person name="Casagrande A."/>
            <person name="Choisne N."/>
            <person name="Aubourg S."/>
            <person name="Vitulo N."/>
            <person name="Jubin C."/>
            <person name="Vezzi A."/>
            <person name="Legeai F."/>
            <person name="Hugueney P."/>
            <person name="Dasilva C."/>
            <person name="Horner D."/>
            <person name="Mica E."/>
            <person name="Jublot D."/>
            <person name="Poulain J."/>
            <person name="Bruyere C."/>
            <person name="Billault A."/>
            <person name="Segurens B."/>
            <person name="Gouyvenoux M."/>
            <person name="Ugarte E."/>
            <person name="Cattonaro F."/>
            <person name="Anthouard V."/>
            <person name="Vico V."/>
            <person name="Del Fabbro C."/>
            <person name="Alaux M."/>
            <person name="Di Gaspero G."/>
            <person name="Dumas V."/>
            <person name="Felice N."/>
            <person name="Paillard S."/>
            <person name="Juman I."/>
            <person name="Moroldo M."/>
            <person name="Scalabrin S."/>
            <person name="Canaguier A."/>
            <person name="Le Clainche I."/>
            <person name="Malacrida G."/>
            <person name="Durand E."/>
            <person name="Pesole G."/>
            <person name="Laucou V."/>
            <person name="Chatelet P."/>
            <person name="Merdinoglu D."/>
            <person name="Delledonne M."/>
            <person name="Pezzotti M."/>
            <person name="Lecharny A."/>
            <person name="Scarpelli C."/>
            <person name="Artiguenave F."/>
            <person name="Pe M.E."/>
            <person name="Valle G."/>
            <person name="Morgante M."/>
            <person name="Caboche M."/>
            <person name="Adam-Blondon A.-F."/>
            <person name="Weissenbach J."/>
            <person name="Quetier F."/>
            <person name="Wincker P."/>
        </authorList>
    </citation>
    <scope>NUCLEOTIDE SEQUENCE [LARGE SCALE GENOMIC DNA]</scope>
    <source>
        <strain>cv. Pinot noir / PN40024</strain>
    </source>
</reference>
<keyword id="KW-0067">ATP-binding</keyword>
<keyword id="KW-0456">Lyase</keyword>
<keyword id="KW-0520">NAD</keyword>
<keyword id="KW-0521">NADP</keyword>
<keyword id="KW-0547">Nucleotide-binding</keyword>
<keyword id="KW-0597">Phosphoprotein</keyword>
<keyword id="KW-1185">Reference proteome</keyword>
<evidence type="ECO:0000255" key="1">
    <source>
        <dbReference type="HAMAP-Rule" id="MF_03157"/>
    </source>
</evidence>
<feature type="chain" id="PRO_0000416176" description="ATP-dependent (S)-NAD(P)H-hydrate dehydratase">
    <location>
        <begin position="1"/>
        <end position="354"/>
    </location>
</feature>
<feature type="domain" description="YjeF C-terminal" evidence="1">
    <location>
        <begin position="42"/>
        <end position="350"/>
    </location>
</feature>
<feature type="binding site" evidence="1">
    <location>
        <position position="155"/>
    </location>
    <ligand>
        <name>(6S)-NADPHX</name>
        <dbReference type="ChEBI" id="CHEBI:64076"/>
    </ligand>
</feature>
<feature type="binding site" evidence="1">
    <location>
        <begin position="208"/>
        <end position="214"/>
    </location>
    <ligand>
        <name>(6S)-NADPHX</name>
        <dbReference type="ChEBI" id="CHEBI:64076"/>
    </ligand>
</feature>
<feature type="binding site" evidence="1">
    <location>
        <begin position="248"/>
        <end position="252"/>
    </location>
    <ligand>
        <name>ATP</name>
        <dbReference type="ChEBI" id="CHEBI:30616"/>
    </ligand>
</feature>
<feature type="binding site" evidence="1">
    <location>
        <begin position="267"/>
        <end position="276"/>
    </location>
    <ligand>
        <name>ATP</name>
        <dbReference type="ChEBI" id="CHEBI:30616"/>
    </ligand>
</feature>
<feature type="binding site" evidence="1">
    <location>
        <position position="277"/>
    </location>
    <ligand>
        <name>(6S)-NADPHX</name>
        <dbReference type="ChEBI" id="CHEBI:64076"/>
    </ligand>
</feature>
<proteinExistence type="inferred from homology"/>
<gene>
    <name type="ordered locus">VIT_05s0020g02800</name>
</gene>
<accession>F6HDM2</accession>